<protein>
    <recommendedName>
        <fullName evidence="1">Ribulose bisphosphate carboxylase large chain</fullName>
        <shortName evidence="1">RuBisCO large subunit</shortName>
        <ecNumber evidence="1">4.1.1.39</ecNumber>
    </recommendedName>
</protein>
<evidence type="ECO:0000255" key="1">
    <source>
        <dbReference type="HAMAP-Rule" id="MF_01338"/>
    </source>
</evidence>
<organism>
    <name type="scientific">Drosera dichrosepala</name>
    <name type="common">Rusty sundew</name>
    <dbReference type="NCBI Taxonomy" id="4367"/>
    <lineage>
        <taxon>Eukaryota</taxon>
        <taxon>Viridiplantae</taxon>
        <taxon>Streptophyta</taxon>
        <taxon>Embryophyta</taxon>
        <taxon>Tracheophyta</taxon>
        <taxon>Spermatophyta</taxon>
        <taxon>Magnoliopsida</taxon>
        <taxon>eudicotyledons</taxon>
        <taxon>Gunneridae</taxon>
        <taxon>Pentapetalae</taxon>
        <taxon>Caryophyllales</taxon>
        <taxon>Droseraceae</taxon>
        <taxon>Drosera</taxon>
    </lineage>
</organism>
<name>RBL_DRODC</name>
<reference key="1">
    <citation type="journal article" date="1992" name="Science">
        <title>Carnivorous plants: phylogeny and structural evolution.</title>
        <authorList>
            <person name="Albert V.A."/>
            <person name="Williams S.E."/>
            <person name="Chase M.W."/>
        </authorList>
    </citation>
    <scope>NUCLEOTIDE SEQUENCE [GENOMIC DNA]</scope>
</reference>
<dbReference type="EC" id="4.1.1.39" evidence="1"/>
<dbReference type="EMBL" id="L01910">
    <property type="protein sequence ID" value="AAA16238.2"/>
    <property type="molecule type" value="Genomic_DNA"/>
</dbReference>
<dbReference type="SMR" id="P28406"/>
<dbReference type="GO" id="GO:0009507">
    <property type="term" value="C:chloroplast"/>
    <property type="evidence" value="ECO:0007669"/>
    <property type="project" value="UniProtKB-SubCell"/>
</dbReference>
<dbReference type="GO" id="GO:0000287">
    <property type="term" value="F:magnesium ion binding"/>
    <property type="evidence" value="ECO:0007669"/>
    <property type="project" value="InterPro"/>
</dbReference>
<dbReference type="GO" id="GO:0004497">
    <property type="term" value="F:monooxygenase activity"/>
    <property type="evidence" value="ECO:0007669"/>
    <property type="project" value="UniProtKB-KW"/>
</dbReference>
<dbReference type="GO" id="GO:0016984">
    <property type="term" value="F:ribulose-bisphosphate carboxylase activity"/>
    <property type="evidence" value="ECO:0007669"/>
    <property type="project" value="UniProtKB-EC"/>
</dbReference>
<dbReference type="GO" id="GO:0009853">
    <property type="term" value="P:photorespiration"/>
    <property type="evidence" value="ECO:0007669"/>
    <property type="project" value="UniProtKB-KW"/>
</dbReference>
<dbReference type="GO" id="GO:0019253">
    <property type="term" value="P:reductive pentose-phosphate cycle"/>
    <property type="evidence" value="ECO:0007669"/>
    <property type="project" value="UniProtKB-KW"/>
</dbReference>
<dbReference type="CDD" id="cd08212">
    <property type="entry name" value="RuBisCO_large_I"/>
    <property type="match status" value="1"/>
</dbReference>
<dbReference type="FunFam" id="3.20.20.110:FF:000003">
    <property type="entry name" value="Ribulose bisphosphate carboxylase large chain"/>
    <property type="match status" value="1"/>
</dbReference>
<dbReference type="FunFam" id="3.30.70.150:FF:000001">
    <property type="entry name" value="Ribulose bisphosphate carboxylase large chain"/>
    <property type="match status" value="1"/>
</dbReference>
<dbReference type="Gene3D" id="3.20.20.110">
    <property type="entry name" value="Ribulose bisphosphate carboxylase, large subunit, C-terminal domain"/>
    <property type="match status" value="1"/>
</dbReference>
<dbReference type="Gene3D" id="3.30.70.150">
    <property type="entry name" value="RuBisCO large subunit, N-terminal domain"/>
    <property type="match status" value="1"/>
</dbReference>
<dbReference type="HAMAP" id="MF_01338">
    <property type="entry name" value="RuBisCO_L_type1"/>
    <property type="match status" value="1"/>
</dbReference>
<dbReference type="InterPro" id="IPR033966">
    <property type="entry name" value="RuBisCO"/>
</dbReference>
<dbReference type="InterPro" id="IPR020878">
    <property type="entry name" value="RuBisCo_large_chain_AS"/>
</dbReference>
<dbReference type="InterPro" id="IPR000685">
    <property type="entry name" value="RuBisCO_lsu_C"/>
</dbReference>
<dbReference type="InterPro" id="IPR036376">
    <property type="entry name" value="RuBisCO_lsu_C_sf"/>
</dbReference>
<dbReference type="InterPro" id="IPR017443">
    <property type="entry name" value="RuBisCO_lsu_fd_N"/>
</dbReference>
<dbReference type="InterPro" id="IPR036422">
    <property type="entry name" value="RuBisCO_lsu_N_sf"/>
</dbReference>
<dbReference type="InterPro" id="IPR020888">
    <property type="entry name" value="RuBisCO_lsuI"/>
</dbReference>
<dbReference type="NCBIfam" id="NF003252">
    <property type="entry name" value="PRK04208.1"/>
    <property type="match status" value="1"/>
</dbReference>
<dbReference type="PANTHER" id="PTHR42704">
    <property type="entry name" value="RIBULOSE BISPHOSPHATE CARBOXYLASE"/>
    <property type="match status" value="1"/>
</dbReference>
<dbReference type="PANTHER" id="PTHR42704:SF15">
    <property type="entry name" value="RIBULOSE BISPHOSPHATE CARBOXYLASE LARGE CHAIN"/>
    <property type="match status" value="1"/>
</dbReference>
<dbReference type="Pfam" id="PF00016">
    <property type="entry name" value="RuBisCO_large"/>
    <property type="match status" value="1"/>
</dbReference>
<dbReference type="Pfam" id="PF02788">
    <property type="entry name" value="RuBisCO_large_N"/>
    <property type="match status" value="1"/>
</dbReference>
<dbReference type="SFLD" id="SFLDG01052">
    <property type="entry name" value="RuBisCO"/>
    <property type="match status" value="1"/>
</dbReference>
<dbReference type="SFLD" id="SFLDS00014">
    <property type="entry name" value="RuBisCO"/>
    <property type="match status" value="1"/>
</dbReference>
<dbReference type="SFLD" id="SFLDG00301">
    <property type="entry name" value="RuBisCO-like_proteins"/>
    <property type="match status" value="1"/>
</dbReference>
<dbReference type="SUPFAM" id="SSF51649">
    <property type="entry name" value="RuBisCo, C-terminal domain"/>
    <property type="match status" value="1"/>
</dbReference>
<dbReference type="SUPFAM" id="SSF54966">
    <property type="entry name" value="RuBisCO, large subunit, small (N-terminal) domain"/>
    <property type="match status" value="1"/>
</dbReference>
<dbReference type="PROSITE" id="PS00157">
    <property type="entry name" value="RUBISCO_LARGE"/>
    <property type="match status" value="1"/>
</dbReference>
<sequence>SVGFKAGVKDYKLTYYTPAYQTLDTDILAAFRVTPQPGVPPEEAGAAVAAESSTGTWTTVWTDGLTSLDRYKGRCYHIEPVAGEENQYIVYVAYPLDLFEEGSVTNMFTSIVGNVFGFKALRALRLEDLRIPPAYTKTFQGPPHGIQVERDKLNKYGRPLLGCTIKPKLGLSAKNYGRAVYECLRGGLDFTKDDENVNSQPFMRWRDRFLFCAEAIYKAQAQTGEIKGHYLNATAGTCEEMIKRAVFARELGVPIVMHDYLTGGFTANTTLAHYCRDNGLLLHIHRAMHAVIDRQKNHGIHFRVLAKALRLSGGDHIHSGTVVGKLEGERDITLGFVDLLRDDYIEKDRSRGIYFSQYWVSIPGVLPVASGGIHVWHMPALTEIFGDDSVLQFGGGTLGHPWGNAPGAVANRVALEACVQARNEGLDLAREGNEIIRKARK</sequence>
<proteinExistence type="inferred from homology"/>
<feature type="chain" id="PRO_0000062449" description="Ribulose bisphosphate carboxylase large chain">
    <location>
        <begin position="1" status="less than"/>
        <end position="441" status="greater than"/>
    </location>
</feature>
<feature type="active site" description="Proton acceptor" evidence="1">
    <location>
        <position position="166"/>
    </location>
</feature>
<feature type="active site" description="Proton acceptor" evidence="1">
    <location>
        <position position="285"/>
    </location>
</feature>
<feature type="binding site" description="in homodimeric partner" evidence="1">
    <location>
        <position position="114"/>
    </location>
    <ligand>
        <name>substrate</name>
    </ligand>
</feature>
<feature type="binding site" evidence="1">
    <location>
        <position position="164"/>
    </location>
    <ligand>
        <name>substrate</name>
    </ligand>
</feature>
<feature type="binding site" evidence="1">
    <location>
        <position position="168"/>
    </location>
    <ligand>
        <name>substrate</name>
    </ligand>
</feature>
<feature type="binding site" description="via carbamate group" evidence="1">
    <location>
        <position position="192"/>
    </location>
    <ligand>
        <name>Mg(2+)</name>
        <dbReference type="ChEBI" id="CHEBI:18420"/>
    </ligand>
</feature>
<feature type="binding site" evidence="1">
    <location>
        <position position="194"/>
    </location>
    <ligand>
        <name>Mg(2+)</name>
        <dbReference type="ChEBI" id="CHEBI:18420"/>
    </ligand>
</feature>
<feature type="binding site" evidence="1">
    <location>
        <position position="195"/>
    </location>
    <ligand>
        <name>Mg(2+)</name>
        <dbReference type="ChEBI" id="CHEBI:18420"/>
    </ligand>
</feature>
<feature type="binding site" evidence="1">
    <location>
        <position position="286"/>
    </location>
    <ligand>
        <name>substrate</name>
    </ligand>
</feature>
<feature type="binding site" evidence="1">
    <location>
        <position position="318"/>
    </location>
    <ligand>
        <name>substrate</name>
    </ligand>
</feature>
<feature type="binding site" evidence="1">
    <location>
        <position position="370"/>
    </location>
    <ligand>
        <name>substrate</name>
    </ligand>
</feature>
<feature type="site" description="Transition state stabilizer" evidence="1">
    <location>
        <position position="325"/>
    </location>
</feature>
<feature type="modified residue" description="N6,N6,N6-trimethyllysine" evidence="1">
    <location>
        <position position="5"/>
    </location>
</feature>
<feature type="modified residue" description="N6-carboxylysine" evidence="1">
    <location>
        <position position="192"/>
    </location>
</feature>
<feature type="disulfide bond" description="Interchain; in linked form" evidence="1">
    <location>
        <position position="238"/>
    </location>
</feature>
<feature type="non-terminal residue">
    <location>
        <position position="1"/>
    </location>
</feature>
<feature type="non-terminal residue">
    <location>
        <position position="441"/>
    </location>
</feature>
<geneLocation type="chloroplast"/>
<comment type="function">
    <text evidence="1">RuBisCO catalyzes two reactions: the carboxylation of D-ribulose 1,5-bisphosphate, the primary event in carbon dioxide fixation, as well as the oxidative fragmentation of the pentose substrate in the photorespiration process. Both reactions occur simultaneously and in competition at the same active site.</text>
</comment>
<comment type="catalytic activity">
    <reaction evidence="1">
        <text>2 (2R)-3-phosphoglycerate + 2 H(+) = D-ribulose 1,5-bisphosphate + CO2 + H2O</text>
        <dbReference type="Rhea" id="RHEA:23124"/>
        <dbReference type="ChEBI" id="CHEBI:15377"/>
        <dbReference type="ChEBI" id="CHEBI:15378"/>
        <dbReference type="ChEBI" id="CHEBI:16526"/>
        <dbReference type="ChEBI" id="CHEBI:57870"/>
        <dbReference type="ChEBI" id="CHEBI:58272"/>
        <dbReference type="EC" id="4.1.1.39"/>
    </reaction>
</comment>
<comment type="catalytic activity">
    <reaction evidence="1">
        <text>D-ribulose 1,5-bisphosphate + O2 = 2-phosphoglycolate + (2R)-3-phosphoglycerate + 2 H(+)</text>
        <dbReference type="Rhea" id="RHEA:36631"/>
        <dbReference type="ChEBI" id="CHEBI:15378"/>
        <dbReference type="ChEBI" id="CHEBI:15379"/>
        <dbReference type="ChEBI" id="CHEBI:57870"/>
        <dbReference type="ChEBI" id="CHEBI:58033"/>
        <dbReference type="ChEBI" id="CHEBI:58272"/>
    </reaction>
</comment>
<comment type="cofactor">
    <cofactor evidence="1">
        <name>Mg(2+)</name>
        <dbReference type="ChEBI" id="CHEBI:18420"/>
    </cofactor>
    <text evidence="1">Binds 1 Mg(2+) ion per subunit.</text>
</comment>
<comment type="subunit">
    <text evidence="1">Heterohexadecamer of 8 large chains and 8 small chains; disulfide-linked. The disulfide link is formed within the large subunit homodimers.</text>
</comment>
<comment type="subcellular location">
    <subcellularLocation>
        <location>Plastid</location>
        <location>Chloroplast</location>
    </subcellularLocation>
</comment>
<comment type="PTM">
    <text evidence="1">The disulfide bond which can form in the large chain dimeric partners within the hexadecamer appears to be associated with oxidative stress and protein turnover.</text>
</comment>
<comment type="miscellaneous">
    <text evidence="1">The basic functional RuBisCO is composed of a large chain homodimer in a 'head-to-tail' conformation. In form I RuBisCO this homodimer is arranged in a barrel-like tetramer with the small subunits forming a tetrameric 'cap' on each end of the 'barrel'.</text>
</comment>
<comment type="similarity">
    <text evidence="1">Belongs to the RuBisCO large chain family. Type I subfamily.</text>
</comment>
<gene>
    <name evidence="1" type="primary">rbcL</name>
</gene>
<accession>P28406</accession>
<keyword id="KW-0113">Calvin cycle</keyword>
<keyword id="KW-0120">Carbon dioxide fixation</keyword>
<keyword id="KW-0150">Chloroplast</keyword>
<keyword id="KW-1015">Disulfide bond</keyword>
<keyword id="KW-0456">Lyase</keyword>
<keyword id="KW-0460">Magnesium</keyword>
<keyword id="KW-0479">Metal-binding</keyword>
<keyword id="KW-0488">Methylation</keyword>
<keyword id="KW-0503">Monooxygenase</keyword>
<keyword id="KW-0560">Oxidoreductase</keyword>
<keyword id="KW-0601">Photorespiration</keyword>
<keyword id="KW-0602">Photosynthesis</keyword>
<keyword id="KW-0934">Plastid</keyword>